<name>ENL05_ARATH</name>
<organism>
    <name type="scientific">Arabidopsis thaliana</name>
    <name type="common">Mouse-ear cress</name>
    <dbReference type="NCBI Taxonomy" id="3702"/>
    <lineage>
        <taxon>Eukaryota</taxon>
        <taxon>Viridiplantae</taxon>
        <taxon>Streptophyta</taxon>
        <taxon>Embryophyta</taxon>
        <taxon>Tracheophyta</taxon>
        <taxon>Spermatophyta</taxon>
        <taxon>Magnoliopsida</taxon>
        <taxon>eudicotyledons</taxon>
        <taxon>Gunneridae</taxon>
        <taxon>Pentapetalae</taxon>
        <taxon>rosids</taxon>
        <taxon>malvids</taxon>
        <taxon>Brassicales</taxon>
        <taxon>Brassicaceae</taxon>
        <taxon>Camelineae</taxon>
        <taxon>Arabidopsis</taxon>
    </lineage>
</organism>
<keyword id="KW-1003">Cell membrane</keyword>
<keyword id="KW-1015">Disulfide bond</keyword>
<keyword id="KW-0325">Glycoprotein</keyword>
<keyword id="KW-0336">GPI-anchor</keyword>
<keyword id="KW-0449">Lipoprotein</keyword>
<keyword id="KW-0472">Membrane</keyword>
<keyword id="KW-1185">Reference proteome</keyword>
<keyword id="KW-0732">Signal</keyword>
<dbReference type="EMBL" id="FJ587290">
    <property type="protein sequence ID" value="ACL93291.1"/>
    <property type="molecule type" value="mRNA"/>
</dbReference>
<dbReference type="EMBL" id="AP001303">
    <property type="protein sequence ID" value="BAB02217.1"/>
    <property type="molecule type" value="Genomic_DNA"/>
</dbReference>
<dbReference type="EMBL" id="CP002686">
    <property type="protein sequence ID" value="AEE76120.1"/>
    <property type="molecule type" value="Genomic_DNA"/>
</dbReference>
<dbReference type="RefSeq" id="NP_188489.1">
    <property type="nucleotide sequence ID" value="NM_112745.2"/>
</dbReference>
<dbReference type="SMR" id="Q9LII0"/>
<dbReference type="FunCoup" id="Q9LII0">
    <property type="interactions" value="48"/>
</dbReference>
<dbReference type="STRING" id="3702.Q9LII0"/>
<dbReference type="PaxDb" id="3702-AT3G18590.1"/>
<dbReference type="ProteomicsDB" id="252411"/>
<dbReference type="EnsemblPlants" id="AT3G18590.1">
    <property type="protein sequence ID" value="AT3G18590.1"/>
    <property type="gene ID" value="AT3G18590"/>
</dbReference>
<dbReference type="GeneID" id="821390"/>
<dbReference type="Gramene" id="AT3G18590.1">
    <property type="protein sequence ID" value="AT3G18590.1"/>
    <property type="gene ID" value="AT3G18590"/>
</dbReference>
<dbReference type="KEGG" id="ath:AT3G18590"/>
<dbReference type="Araport" id="AT3G18590"/>
<dbReference type="TAIR" id="AT3G18590">
    <property type="gene designation" value="ENODL5"/>
</dbReference>
<dbReference type="eggNOG" id="ENOG502S114">
    <property type="taxonomic scope" value="Eukaryota"/>
</dbReference>
<dbReference type="HOGENOM" id="CLU_058719_1_3_1"/>
<dbReference type="InParanoid" id="Q9LII0"/>
<dbReference type="OMA" id="MIVKVME"/>
<dbReference type="OrthoDB" id="959565at2759"/>
<dbReference type="PRO" id="PR:Q9LII0"/>
<dbReference type="Proteomes" id="UP000006548">
    <property type="component" value="Chromosome 3"/>
</dbReference>
<dbReference type="ExpressionAtlas" id="Q9LII0">
    <property type="expression patterns" value="baseline and differential"/>
</dbReference>
<dbReference type="GO" id="GO:0005886">
    <property type="term" value="C:plasma membrane"/>
    <property type="evidence" value="ECO:0007669"/>
    <property type="project" value="UniProtKB-SubCell"/>
</dbReference>
<dbReference type="GO" id="GO:0098552">
    <property type="term" value="C:side of membrane"/>
    <property type="evidence" value="ECO:0007669"/>
    <property type="project" value="UniProtKB-KW"/>
</dbReference>
<dbReference type="GO" id="GO:0009055">
    <property type="term" value="F:electron transfer activity"/>
    <property type="evidence" value="ECO:0007669"/>
    <property type="project" value="InterPro"/>
</dbReference>
<dbReference type="CDD" id="cd11019">
    <property type="entry name" value="OsENODL1_like"/>
    <property type="match status" value="1"/>
</dbReference>
<dbReference type="FunFam" id="2.60.40.420:FF:000010">
    <property type="entry name" value="Early nodulin-like protein 1"/>
    <property type="match status" value="1"/>
</dbReference>
<dbReference type="Gene3D" id="2.60.40.420">
    <property type="entry name" value="Cupredoxins - blue copper proteins"/>
    <property type="match status" value="1"/>
</dbReference>
<dbReference type="InterPro" id="IPR008972">
    <property type="entry name" value="Cupredoxin"/>
</dbReference>
<dbReference type="InterPro" id="IPR041846">
    <property type="entry name" value="ENL_dom"/>
</dbReference>
<dbReference type="InterPro" id="IPR039391">
    <property type="entry name" value="Phytocyanin-like"/>
</dbReference>
<dbReference type="InterPro" id="IPR003245">
    <property type="entry name" value="Phytocyanin_dom"/>
</dbReference>
<dbReference type="PANTHER" id="PTHR33021">
    <property type="entry name" value="BLUE COPPER PROTEIN"/>
    <property type="match status" value="1"/>
</dbReference>
<dbReference type="PANTHER" id="PTHR33021:SF289">
    <property type="entry name" value="EARLY NODULIN-LIKE PROTEIN 5-RELATED"/>
    <property type="match status" value="1"/>
</dbReference>
<dbReference type="Pfam" id="PF02298">
    <property type="entry name" value="Cu_bind_like"/>
    <property type="match status" value="1"/>
</dbReference>
<dbReference type="SUPFAM" id="SSF49503">
    <property type="entry name" value="Cupredoxins"/>
    <property type="match status" value="1"/>
</dbReference>
<dbReference type="PROSITE" id="PS51485">
    <property type="entry name" value="PHYTOCYANIN"/>
    <property type="match status" value="1"/>
</dbReference>
<reference key="1">
    <citation type="journal article" date="2009" name="Biosci. Biotechnol. Biochem.">
        <title>Genome-wide identification, structure and expression studies, and mutant collection of 22 early nodulin-like protein genes in Arabidopsis.</title>
        <authorList>
            <person name="Mashiguchi K."/>
            <person name="Asami T."/>
            <person name="Suzuki Y."/>
        </authorList>
    </citation>
    <scope>NUCLEOTIDE SEQUENCE [MRNA]</scope>
    <scope>FUNCTION</scope>
    <scope>DISRUPTION PHENOTYPE</scope>
    <scope>TISSUE SPECIFICITY</scope>
    <scope>GENE FAMILY</scope>
    <scope>NOMENCLATURE</scope>
    <source>
        <strain>cv. Columbia</strain>
    </source>
</reference>
<reference key="2">
    <citation type="journal article" date="2000" name="DNA Res.">
        <title>Structural analysis of Arabidopsis thaliana chromosome 3. II. Sequence features of the 4,251,695 bp regions covered by 90 P1, TAC and BAC clones.</title>
        <authorList>
            <person name="Kaneko T."/>
            <person name="Katoh T."/>
            <person name="Sato S."/>
            <person name="Nakamura Y."/>
            <person name="Asamizu E."/>
            <person name="Tabata S."/>
        </authorList>
    </citation>
    <scope>NUCLEOTIDE SEQUENCE [LARGE SCALE GENOMIC DNA]</scope>
    <source>
        <strain>cv. Columbia</strain>
    </source>
</reference>
<reference key="3">
    <citation type="journal article" date="2017" name="Plant J.">
        <title>Araport11: a complete reannotation of the Arabidopsis thaliana reference genome.</title>
        <authorList>
            <person name="Cheng C.Y."/>
            <person name="Krishnakumar V."/>
            <person name="Chan A.P."/>
            <person name="Thibaud-Nissen F."/>
            <person name="Schobel S."/>
            <person name="Town C.D."/>
        </authorList>
    </citation>
    <scope>GENOME REANNOTATION</scope>
    <source>
        <strain>cv. Columbia</strain>
    </source>
</reference>
<reference key="4">
    <citation type="journal article" date="2003" name="Plant Physiol.">
        <title>Identification of glycosylphosphatidylinositol-anchored proteins in Arabidopsis. A proteomic and genomic analysis.</title>
        <authorList>
            <person name="Borner G.H.H."/>
            <person name="Lilley K.S."/>
            <person name="Stevens T.J."/>
            <person name="Dupree P."/>
        </authorList>
    </citation>
    <scope>GENE FAMILY</scope>
    <source>
        <strain>cv. Columbia</strain>
    </source>
</reference>
<reference key="5">
    <citation type="journal article" date="2014" name="Plant Cell Physiol.">
        <title>Emerging functions of nodulin-like proteins in non-nodulating plant species.</title>
        <authorList>
            <person name="Denance N."/>
            <person name="Szurek B."/>
            <person name="Noel L.D."/>
        </authorList>
    </citation>
    <scope>REVIEW ON NODULIN-LIKE PROTEINS</scope>
</reference>
<proteinExistence type="evidence at transcript level"/>
<protein>
    <recommendedName>
        <fullName evidence="5">Early nodulin-like protein 5</fullName>
        <shortName evidence="5">AtENODL5</shortName>
    </recommendedName>
    <alternativeName>
        <fullName evidence="7">Phytocyanin-like protein ENODL5</fullName>
    </alternativeName>
</protein>
<feature type="signal peptide" evidence="1">
    <location>
        <begin position="1"/>
        <end position="24"/>
    </location>
</feature>
<feature type="chain" id="PRO_0000457735" description="Early nodulin-like protein 5">
    <location>
        <begin position="25"/>
        <end position="170"/>
    </location>
</feature>
<feature type="propeptide" id="PRO_0000457736" description="Removed in mature form" evidence="1">
    <location>
        <begin position="171"/>
        <end position="188"/>
    </location>
</feature>
<feature type="domain" description="Phytocyanin" evidence="2">
    <location>
        <begin position="25"/>
        <end position="128"/>
    </location>
</feature>
<feature type="region of interest" description="Disordered" evidence="3">
    <location>
        <begin position="127"/>
        <end position="157"/>
    </location>
</feature>
<feature type="compositionally biased region" description="Low complexity" evidence="3">
    <location>
        <begin position="129"/>
        <end position="155"/>
    </location>
</feature>
<feature type="lipid moiety-binding region" description="GPI-anchor amidated serine" evidence="1">
    <location>
        <position position="170"/>
    </location>
</feature>
<feature type="disulfide bond" evidence="2">
    <location>
        <begin position="82"/>
        <end position="116"/>
    </location>
</feature>
<comment type="function">
    <text evidence="4 6">May act as a carbohydrate transporter (PubMed:24470637). Mainly required for reproductive functions (PubMed:19897921).</text>
</comment>
<comment type="subcellular location">
    <subcellularLocation>
        <location evidence="1">Cell membrane</location>
        <topology evidence="1">Lipid-anchor</topology>
        <topology evidence="1">GPI-anchor</topology>
    </subcellularLocation>
</comment>
<comment type="tissue specificity">
    <text evidence="4">Mostly expressed in leaves and flowers, and, to a lower extent, in stems.</text>
</comment>
<comment type="disruption phenotype">
    <text evidence="4">Abnormally low frequency of progeny.</text>
</comment>
<comment type="similarity">
    <text evidence="7">Belongs to the early nodulin-like (ENODL) family.</text>
</comment>
<evidence type="ECO:0000255" key="1"/>
<evidence type="ECO:0000255" key="2">
    <source>
        <dbReference type="PROSITE-ProRule" id="PRU00818"/>
    </source>
</evidence>
<evidence type="ECO:0000256" key="3">
    <source>
        <dbReference type="SAM" id="MobiDB-lite"/>
    </source>
</evidence>
<evidence type="ECO:0000269" key="4">
    <source>
    </source>
</evidence>
<evidence type="ECO:0000303" key="5">
    <source>
    </source>
</evidence>
<evidence type="ECO:0000303" key="6">
    <source>
    </source>
</evidence>
<evidence type="ECO:0000305" key="7"/>
<evidence type="ECO:0000312" key="8">
    <source>
        <dbReference type="Araport" id="AT3G18590"/>
    </source>
</evidence>
<evidence type="ECO:0000312" key="9">
    <source>
        <dbReference type="EMBL" id="BAB02217.1"/>
    </source>
</evidence>
<sequence length="188" mass="20561">MDSSKKIIIVMFLVTFYMFSCVSSTEFEVGGENGWIVPKSKTLGDAFNQWASDNRFKVGDTLRFKYTKDSVLVVSEEEYKKCKATKPQLYSNNEDTVFKLDRPGLFYFISGVSGHCEKGQKMIVKVMETESSTESPPPSSSSSSSSSSSLPASTPKAKKSNAFKTAVQFSSSGFVVSAVLIVSVFGLV</sequence>
<gene>
    <name evidence="5" type="primary">ENODL5</name>
    <name evidence="5" type="synonym">EN5</name>
    <name evidence="8" type="ordered locus">At3g18590</name>
    <name evidence="9" type="ORF">K24M9.8</name>
</gene>
<accession>Q9LII0</accession>
<accession>A0A178V7R8</accession>